<gene>
    <name type="ordered locus">CGSHiEE_07045</name>
</gene>
<evidence type="ECO:0000255" key="1">
    <source>
        <dbReference type="HAMAP-Rule" id="MF_00652"/>
    </source>
</evidence>
<organism>
    <name type="scientific">Haemophilus influenzae (strain PittEE)</name>
    <dbReference type="NCBI Taxonomy" id="374930"/>
    <lineage>
        <taxon>Bacteria</taxon>
        <taxon>Pseudomonadati</taxon>
        <taxon>Pseudomonadota</taxon>
        <taxon>Gammaproteobacteria</taxon>
        <taxon>Pasteurellales</taxon>
        <taxon>Pasteurellaceae</taxon>
        <taxon>Haemophilus</taxon>
    </lineage>
</organism>
<protein>
    <recommendedName>
        <fullName evidence="1">UPF0246 protein CGSHiEE_07045</fullName>
    </recommendedName>
</protein>
<sequence>MLAIISPAKTLDFESAVKNFPVSQPHFTDYSEQLIEVCRKLSPQDLSSLMSISDKLAGLNAARFAEWTKIHNENNSRPALFAFKGDVYTGLDADSLSEDDVIFAQSHLRMLSGLYGLLKPLDLMQPYRLEMGTKLANPKGKDLYAFWGNVITQAVQQAIDAQGDNVLVNLASDEYYKSVKESQINAKIIKPVFLDNKNGKYKVISFYAKKARGLMCRYIIQHHLTEIEQLKEFDLGGYWFDSASSTETEFVFKRDINE</sequence>
<name>Y7045_HAEIE</name>
<dbReference type="EMBL" id="CP000671">
    <property type="protein sequence ID" value="ABQ98738.1"/>
    <property type="molecule type" value="Genomic_DNA"/>
</dbReference>
<dbReference type="SMR" id="A5UD87"/>
<dbReference type="KEGG" id="hip:CGSHiEE_07045"/>
<dbReference type="HOGENOM" id="CLU_061989_0_0_6"/>
<dbReference type="GO" id="GO:0005829">
    <property type="term" value="C:cytosol"/>
    <property type="evidence" value="ECO:0007669"/>
    <property type="project" value="TreeGrafter"/>
</dbReference>
<dbReference type="GO" id="GO:0033194">
    <property type="term" value="P:response to hydroperoxide"/>
    <property type="evidence" value="ECO:0007669"/>
    <property type="project" value="TreeGrafter"/>
</dbReference>
<dbReference type="HAMAP" id="MF_00652">
    <property type="entry name" value="UPF0246"/>
    <property type="match status" value="1"/>
</dbReference>
<dbReference type="InterPro" id="IPR005583">
    <property type="entry name" value="YaaA"/>
</dbReference>
<dbReference type="NCBIfam" id="NF002541">
    <property type="entry name" value="PRK02101.1-1"/>
    <property type="match status" value="1"/>
</dbReference>
<dbReference type="NCBIfam" id="NF002542">
    <property type="entry name" value="PRK02101.1-3"/>
    <property type="match status" value="1"/>
</dbReference>
<dbReference type="PANTHER" id="PTHR30283:SF4">
    <property type="entry name" value="PEROXIDE STRESS RESISTANCE PROTEIN YAAA"/>
    <property type="match status" value="1"/>
</dbReference>
<dbReference type="PANTHER" id="PTHR30283">
    <property type="entry name" value="PEROXIDE STRESS RESPONSE PROTEIN YAAA"/>
    <property type="match status" value="1"/>
</dbReference>
<dbReference type="Pfam" id="PF03883">
    <property type="entry name" value="H2O2_YaaD"/>
    <property type="match status" value="1"/>
</dbReference>
<accession>A5UD87</accession>
<comment type="similarity">
    <text evidence="1">Belongs to the UPF0246 family.</text>
</comment>
<proteinExistence type="inferred from homology"/>
<feature type="chain" id="PRO_1000061606" description="UPF0246 protein CGSHiEE_07045">
    <location>
        <begin position="1"/>
        <end position="258"/>
    </location>
</feature>
<reference key="1">
    <citation type="journal article" date="2007" name="Genome Biol.">
        <title>Characterization and modeling of the Haemophilus influenzae core and supragenomes based on the complete genomic sequences of Rd and 12 clinical nontypeable strains.</title>
        <authorList>
            <person name="Hogg J.S."/>
            <person name="Hu F.Z."/>
            <person name="Janto B."/>
            <person name="Boissy R."/>
            <person name="Hayes J."/>
            <person name="Keefe R."/>
            <person name="Post J.C."/>
            <person name="Ehrlich G.D."/>
        </authorList>
    </citation>
    <scope>NUCLEOTIDE SEQUENCE [LARGE SCALE GENOMIC DNA]</scope>
    <source>
        <strain>PittEE</strain>
    </source>
</reference>